<proteinExistence type="evidence at protein level"/>
<feature type="chain" id="PRO_0000436988" description="Transcription factor STKL2">
    <location>
        <begin position="1"/>
        <end position="319"/>
    </location>
</feature>
<feature type="region of interest" description="Disordered" evidence="1">
    <location>
        <begin position="1"/>
        <end position="119"/>
    </location>
</feature>
<feature type="compositionally biased region" description="Basic and acidic residues" evidence="1">
    <location>
        <begin position="21"/>
        <end position="34"/>
    </location>
</feature>
<feature type="compositionally biased region" description="Polar residues" evidence="1">
    <location>
        <begin position="38"/>
        <end position="55"/>
    </location>
</feature>
<feature type="compositionally biased region" description="Basic and acidic residues" evidence="1">
    <location>
        <begin position="89"/>
        <end position="112"/>
    </location>
</feature>
<protein>
    <recommendedName>
        <fullName evidence="3">Transcription factor STKL2</fullName>
    </recommendedName>
    <alternativeName>
        <fullName evidence="3">Protein Storekeeper-like 2</fullName>
    </alternativeName>
</protein>
<reference key="1">
    <citation type="journal article" date="1999" name="Nature">
        <title>Sequence and analysis of chromosome 4 of the plant Arabidopsis thaliana.</title>
        <authorList>
            <person name="Mayer K.F.X."/>
            <person name="Schueller C."/>
            <person name="Wambutt R."/>
            <person name="Murphy G."/>
            <person name="Volckaert G."/>
            <person name="Pohl T."/>
            <person name="Duesterhoeft A."/>
            <person name="Stiekema W."/>
            <person name="Entian K.-D."/>
            <person name="Terryn N."/>
            <person name="Harris B."/>
            <person name="Ansorge W."/>
            <person name="Brandt P."/>
            <person name="Grivell L.A."/>
            <person name="Rieger M."/>
            <person name="Weichselgartner M."/>
            <person name="de Simone V."/>
            <person name="Obermaier B."/>
            <person name="Mache R."/>
            <person name="Mueller M."/>
            <person name="Kreis M."/>
            <person name="Delseny M."/>
            <person name="Puigdomenech P."/>
            <person name="Watson M."/>
            <person name="Schmidtheini T."/>
            <person name="Reichert B."/>
            <person name="Portetelle D."/>
            <person name="Perez-Alonso M."/>
            <person name="Boutry M."/>
            <person name="Bancroft I."/>
            <person name="Vos P."/>
            <person name="Hoheisel J."/>
            <person name="Zimmermann W."/>
            <person name="Wedler H."/>
            <person name="Ridley P."/>
            <person name="Langham S.-A."/>
            <person name="McCullagh B."/>
            <person name="Bilham L."/>
            <person name="Robben J."/>
            <person name="van der Schueren J."/>
            <person name="Grymonprez B."/>
            <person name="Chuang Y.-J."/>
            <person name="Vandenbussche F."/>
            <person name="Braeken M."/>
            <person name="Weltjens I."/>
            <person name="Voet M."/>
            <person name="Bastiaens I."/>
            <person name="Aert R."/>
            <person name="Defoor E."/>
            <person name="Weitzenegger T."/>
            <person name="Bothe G."/>
            <person name="Ramsperger U."/>
            <person name="Hilbert H."/>
            <person name="Braun M."/>
            <person name="Holzer E."/>
            <person name="Brandt A."/>
            <person name="Peters S."/>
            <person name="van Staveren M."/>
            <person name="Dirkse W."/>
            <person name="Mooijman P."/>
            <person name="Klein Lankhorst R."/>
            <person name="Rose M."/>
            <person name="Hauf J."/>
            <person name="Koetter P."/>
            <person name="Berneiser S."/>
            <person name="Hempel S."/>
            <person name="Feldpausch M."/>
            <person name="Lamberth S."/>
            <person name="Van den Daele H."/>
            <person name="De Keyser A."/>
            <person name="Buysshaert C."/>
            <person name="Gielen J."/>
            <person name="Villarroel R."/>
            <person name="De Clercq R."/>
            <person name="van Montagu M."/>
            <person name="Rogers J."/>
            <person name="Cronin A."/>
            <person name="Quail M.A."/>
            <person name="Bray-Allen S."/>
            <person name="Clark L."/>
            <person name="Doggett J."/>
            <person name="Hall S."/>
            <person name="Kay M."/>
            <person name="Lennard N."/>
            <person name="McLay K."/>
            <person name="Mayes R."/>
            <person name="Pettett A."/>
            <person name="Rajandream M.A."/>
            <person name="Lyne M."/>
            <person name="Benes V."/>
            <person name="Rechmann S."/>
            <person name="Borkova D."/>
            <person name="Bloecker H."/>
            <person name="Scharfe M."/>
            <person name="Grimm M."/>
            <person name="Loehnert T.-H."/>
            <person name="Dose S."/>
            <person name="de Haan M."/>
            <person name="Maarse A.C."/>
            <person name="Schaefer M."/>
            <person name="Mueller-Auer S."/>
            <person name="Gabel C."/>
            <person name="Fuchs M."/>
            <person name="Fartmann B."/>
            <person name="Granderath K."/>
            <person name="Dauner D."/>
            <person name="Herzl A."/>
            <person name="Neumann S."/>
            <person name="Argiriou A."/>
            <person name="Vitale D."/>
            <person name="Liguori R."/>
            <person name="Piravandi E."/>
            <person name="Massenet O."/>
            <person name="Quigley F."/>
            <person name="Clabauld G."/>
            <person name="Muendlein A."/>
            <person name="Felber R."/>
            <person name="Schnabl S."/>
            <person name="Hiller R."/>
            <person name="Schmidt W."/>
            <person name="Lecharny A."/>
            <person name="Aubourg S."/>
            <person name="Chefdor F."/>
            <person name="Cooke R."/>
            <person name="Berger C."/>
            <person name="Monfort A."/>
            <person name="Casacuberta E."/>
            <person name="Gibbons T."/>
            <person name="Weber N."/>
            <person name="Vandenbol M."/>
            <person name="Bargues M."/>
            <person name="Terol J."/>
            <person name="Torres A."/>
            <person name="Perez-Perez A."/>
            <person name="Purnelle B."/>
            <person name="Bent E."/>
            <person name="Johnson S."/>
            <person name="Tacon D."/>
            <person name="Jesse T."/>
            <person name="Heijnen L."/>
            <person name="Schwarz S."/>
            <person name="Scholler P."/>
            <person name="Heber S."/>
            <person name="Francs P."/>
            <person name="Bielke C."/>
            <person name="Frishman D."/>
            <person name="Haase D."/>
            <person name="Lemcke K."/>
            <person name="Mewes H.-W."/>
            <person name="Stocker S."/>
            <person name="Zaccaria P."/>
            <person name="Bevan M."/>
            <person name="Wilson R.K."/>
            <person name="de la Bastide M."/>
            <person name="Habermann K."/>
            <person name="Parnell L."/>
            <person name="Dedhia N."/>
            <person name="Gnoj L."/>
            <person name="Schutz K."/>
            <person name="Huang E."/>
            <person name="Spiegel L."/>
            <person name="Sekhon M."/>
            <person name="Murray J."/>
            <person name="Sheet P."/>
            <person name="Cordes M."/>
            <person name="Abu-Threideh J."/>
            <person name="Stoneking T."/>
            <person name="Kalicki J."/>
            <person name="Graves T."/>
            <person name="Harmon G."/>
            <person name="Edwards J."/>
            <person name="Latreille P."/>
            <person name="Courtney L."/>
            <person name="Cloud J."/>
            <person name="Abbott A."/>
            <person name="Scott K."/>
            <person name="Johnson D."/>
            <person name="Minx P."/>
            <person name="Bentley D."/>
            <person name="Fulton B."/>
            <person name="Miller N."/>
            <person name="Greco T."/>
            <person name="Kemp K."/>
            <person name="Kramer J."/>
            <person name="Fulton L."/>
            <person name="Mardis E."/>
            <person name="Dante M."/>
            <person name="Pepin K."/>
            <person name="Hillier L.W."/>
            <person name="Nelson J."/>
            <person name="Spieth J."/>
            <person name="Ryan E."/>
            <person name="Andrews S."/>
            <person name="Geisel C."/>
            <person name="Layman D."/>
            <person name="Du H."/>
            <person name="Ali J."/>
            <person name="Berghoff A."/>
            <person name="Jones K."/>
            <person name="Drone K."/>
            <person name="Cotton M."/>
            <person name="Joshu C."/>
            <person name="Antonoiu B."/>
            <person name="Zidanic M."/>
            <person name="Strong C."/>
            <person name="Sun H."/>
            <person name="Lamar B."/>
            <person name="Yordan C."/>
            <person name="Ma P."/>
            <person name="Zhong J."/>
            <person name="Preston R."/>
            <person name="Vil D."/>
            <person name="Shekher M."/>
            <person name="Matero A."/>
            <person name="Shah R."/>
            <person name="Swaby I.K."/>
            <person name="O'Shaughnessy A."/>
            <person name="Rodriguez M."/>
            <person name="Hoffman J."/>
            <person name="Till S."/>
            <person name="Granat S."/>
            <person name="Shohdy N."/>
            <person name="Hasegawa A."/>
            <person name="Hameed A."/>
            <person name="Lodhi M."/>
            <person name="Johnson A."/>
            <person name="Chen E."/>
            <person name="Marra M.A."/>
            <person name="Martienssen R."/>
            <person name="McCombie W.R."/>
        </authorList>
    </citation>
    <scope>NUCLEOTIDE SEQUENCE [LARGE SCALE GENOMIC DNA]</scope>
    <source>
        <strain>cv. Columbia</strain>
    </source>
</reference>
<reference key="2">
    <citation type="journal article" date="2017" name="Plant J.">
        <title>Araport11: a complete reannotation of the Arabidopsis thaliana reference genome.</title>
        <authorList>
            <person name="Cheng C.Y."/>
            <person name="Krishnakumar V."/>
            <person name="Chan A.P."/>
            <person name="Thibaud-Nissen F."/>
            <person name="Schobel S."/>
            <person name="Town C.D."/>
        </authorList>
    </citation>
    <scope>GENOME REANNOTATION</scope>
    <source>
        <strain>cv. Columbia</strain>
    </source>
</reference>
<reference key="3">
    <citation type="journal article" date="2003" name="Science">
        <title>Empirical analysis of transcriptional activity in the Arabidopsis genome.</title>
        <authorList>
            <person name="Yamada K."/>
            <person name="Lim J."/>
            <person name="Dale J.M."/>
            <person name="Chen H."/>
            <person name="Shinn P."/>
            <person name="Palm C.J."/>
            <person name="Southwick A.M."/>
            <person name="Wu H.C."/>
            <person name="Kim C.J."/>
            <person name="Nguyen M."/>
            <person name="Pham P.K."/>
            <person name="Cheuk R.F."/>
            <person name="Karlin-Newmann G."/>
            <person name="Liu S.X."/>
            <person name="Lam B."/>
            <person name="Sakano H."/>
            <person name="Wu T."/>
            <person name="Yu G."/>
            <person name="Miranda M."/>
            <person name="Quach H.L."/>
            <person name="Tripp M."/>
            <person name="Chang C.H."/>
            <person name="Lee J.M."/>
            <person name="Toriumi M.J."/>
            <person name="Chan M.M."/>
            <person name="Tang C.C."/>
            <person name="Onodera C.S."/>
            <person name="Deng J.M."/>
            <person name="Akiyama K."/>
            <person name="Ansari Y."/>
            <person name="Arakawa T."/>
            <person name="Banh J."/>
            <person name="Banno F."/>
            <person name="Bowser L."/>
            <person name="Brooks S.Y."/>
            <person name="Carninci P."/>
            <person name="Chao Q."/>
            <person name="Choy N."/>
            <person name="Enju A."/>
            <person name="Goldsmith A.D."/>
            <person name="Gurjal M."/>
            <person name="Hansen N.F."/>
            <person name="Hayashizaki Y."/>
            <person name="Johnson-Hopson C."/>
            <person name="Hsuan V.W."/>
            <person name="Iida K."/>
            <person name="Karnes M."/>
            <person name="Khan S."/>
            <person name="Koesema E."/>
            <person name="Ishida J."/>
            <person name="Jiang P.X."/>
            <person name="Jones T."/>
            <person name="Kawai J."/>
            <person name="Kamiya A."/>
            <person name="Meyers C."/>
            <person name="Nakajima M."/>
            <person name="Narusaka M."/>
            <person name="Seki M."/>
            <person name="Sakurai T."/>
            <person name="Satou M."/>
            <person name="Tamse R."/>
            <person name="Vaysberg M."/>
            <person name="Wallender E.K."/>
            <person name="Wong C."/>
            <person name="Yamamura Y."/>
            <person name="Yuan S."/>
            <person name="Shinozaki K."/>
            <person name="Davis R.W."/>
            <person name="Theologis A."/>
            <person name="Ecker J.R."/>
        </authorList>
    </citation>
    <scope>NUCLEOTIDE SEQUENCE [LARGE SCALE MRNA]</scope>
    <source>
        <strain>cv. Columbia</strain>
    </source>
</reference>
<reference key="4">
    <citation type="journal article" date="2003" name="Plant J.">
        <title>GeBP, the first member of a new gene family in Arabidopsis, encodes a nuclear protein with DNA-binding activity and is regulated by KNAT1.</title>
        <authorList>
            <person name="Curaba J."/>
            <person name="Herzog M."/>
            <person name="Vachon G."/>
        </authorList>
    </citation>
    <scope>GENE FAMILY</scope>
</reference>
<reference key="5">
    <citation type="journal article" date="2016" name="Plant Physiol. Biochem.">
        <title>Regulation of Arabidopsis thaliana plasma membrane glucose-responsive regulator (AtPGR) expression by A. thaliana storekeeper-like transcription factor, AtSTKL, modulates glucose response in Arabidopsis.</title>
        <authorList>
            <person name="Chung M.S."/>
            <person name="Lee S."/>
            <person name="Min J.H."/>
            <person name="Huang P."/>
            <person name="Ju H.W."/>
            <person name="Kim C.S."/>
        </authorList>
    </citation>
    <scope>FUNCTION</scope>
    <scope>SUBCELLULAR LOCATION</scope>
    <scope>TISSUE SPECIFICITY</scope>
    <scope>INDUCTION BY GLUCOSE</scope>
    <scope>GENE FAMILY</scope>
</reference>
<dbReference type="EMBL" id="AF013293">
    <property type="protein sequence ID" value="AAB62832.1"/>
    <property type="molecule type" value="Genomic_DNA"/>
</dbReference>
<dbReference type="EMBL" id="AF195115">
    <property type="protein sequence ID" value="AAF02790.1"/>
    <property type="molecule type" value="Genomic_DNA"/>
</dbReference>
<dbReference type="EMBL" id="AL161471">
    <property type="protein sequence ID" value="CAB80783.1"/>
    <property type="molecule type" value="Genomic_DNA"/>
</dbReference>
<dbReference type="EMBL" id="CP002687">
    <property type="protein sequence ID" value="AEE81846.1"/>
    <property type="molecule type" value="Genomic_DNA"/>
</dbReference>
<dbReference type="EMBL" id="BT003961">
    <property type="protein sequence ID" value="AAO42006.1"/>
    <property type="molecule type" value="mRNA"/>
</dbReference>
<dbReference type="EMBL" id="BT005666">
    <property type="protein sequence ID" value="AAO64086.1"/>
    <property type="molecule type" value="mRNA"/>
</dbReference>
<dbReference type="PIR" id="T01546">
    <property type="entry name" value="T01546"/>
</dbReference>
<dbReference type="RefSeq" id="NP_567161.1">
    <property type="nucleotide sequence ID" value="NM_116246.3"/>
</dbReference>
<dbReference type="SMR" id="O23077"/>
<dbReference type="IntAct" id="O23077">
    <property type="interactions" value="6"/>
</dbReference>
<dbReference type="STRING" id="3702.O23077"/>
<dbReference type="iPTMnet" id="O23077"/>
<dbReference type="PaxDb" id="3702-AT4G00250.1"/>
<dbReference type="ProteomicsDB" id="228304"/>
<dbReference type="EnsemblPlants" id="AT4G00250.1">
    <property type="protein sequence ID" value="AT4G00250.1"/>
    <property type="gene ID" value="AT4G00250"/>
</dbReference>
<dbReference type="GeneID" id="828046"/>
<dbReference type="Gramene" id="AT4G00250.1">
    <property type="protein sequence ID" value="AT4G00250.1"/>
    <property type="gene ID" value="AT4G00250"/>
</dbReference>
<dbReference type="KEGG" id="ath:AT4G00250"/>
<dbReference type="Araport" id="AT4G00250"/>
<dbReference type="TAIR" id="AT4G00250">
    <property type="gene designation" value="ATSTKL2"/>
</dbReference>
<dbReference type="HOGENOM" id="CLU_051273_0_0_1"/>
<dbReference type="InParanoid" id="O23077"/>
<dbReference type="PhylomeDB" id="O23077"/>
<dbReference type="PRO" id="PR:O23077"/>
<dbReference type="Proteomes" id="UP000006548">
    <property type="component" value="Chromosome 4"/>
</dbReference>
<dbReference type="ExpressionAtlas" id="O23077">
    <property type="expression patterns" value="baseline and differential"/>
</dbReference>
<dbReference type="GO" id="GO:0005634">
    <property type="term" value="C:nucleus"/>
    <property type="evidence" value="ECO:0007669"/>
    <property type="project" value="UniProtKB-SubCell"/>
</dbReference>
<dbReference type="GO" id="GO:0000976">
    <property type="term" value="F:transcription cis-regulatory region binding"/>
    <property type="evidence" value="ECO:0000314"/>
    <property type="project" value="TAIR"/>
</dbReference>
<dbReference type="GO" id="GO:0071333">
    <property type="term" value="P:cellular response to glucose stimulus"/>
    <property type="evidence" value="ECO:0000315"/>
    <property type="project" value="TAIR"/>
</dbReference>
<dbReference type="GO" id="GO:0010629">
    <property type="term" value="P:negative regulation of gene expression"/>
    <property type="evidence" value="ECO:0000315"/>
    <property type="project" value="TAIR"/>
</dbReference>
<dbReference type="GO" id="GO:0006355">
    <property type="term" value="P:regulation of DNA-templated transcription"/>
    <property type="evidence" value="ECO:0000304"/>
    <property type="project" value="TAIR"/>
</dbReference>
<dbReference type="InterPro" id="IPR007592">
    <property type="entry name" value="GEBP"/>
</dbReference>
<dbReference type="InterPro" id="IPR053933">
    <property type="entry name" value="GeBP-like_C"/>
</dbReference>
<dbReference type="InterPro" id="IPR053932">
    <property type="entry name" value="GeBP-like_DBD"/>
</dbReference>
<dbReference type="PANTHER" id="PTHR31662">
    <property type="entry name" value="BNAANNG10740D PROTEIN-RELATED"/>
    <property type="match status" value="1"/>
</dbReference>
<dbReference type="PANTHER" id="PTHR31662:SF68">
    <property type="entry name" value="DNA-BINDING STOREKEEPER PROTEIN TRANSCRIPTIONAL REGULATOR-LIKE PROTEIN-RELATED"/>
    <property type="match status" value="1"/>
</dbReference>
<dbReference type="Pfam" id="PF22757">
    <property type="entry name" value="GeBP-like_C"/>
    <property type="match status" value="1"/>
</dbReference>
<dbReference type="Pfam" id="PF04504">
    <property type="entry name" value="GeBP-like_DBD"/>
    <property type="match status" value="1"/>
</dbReference>
<name>STKLN_ARATH</name>
<gene>
    <name evidence="3" type="primary">STKL2</name>
    <name evidence="5" type="ordered locus">At4g00250</name>
    <name evidence="6" type="ORF">F5I10.12</name>
</gene>
<comment type="function">
    <text evidence="2">Transcription repressor that binds DNA in a sequence-specific manner, 5'-GCCT-3', to regulate the expression of PGR. Acts as a modulatory component for the glucose-triggered developmental leaf growth process.</text>
</comment>
<comment type="interaction">
    <interactant intactId="EBI-15193247">
        <id>O23077</id>
    </interactant>
    <interactant intactId="EBI-15192745">
        <id>Q9LST3</id>
        <label>At5g60142</label>
    </interactant>
    <organismsDiffer>false</organismsDiffer>
    <experiments>3</experiments>
</comment>
<comment type="subcellular location">
    <subcellularLocation>
        <location evidence="2">Nucleus</location>
    </subcellularLocation>
</comment>
<comment type="tissue specificity">
    <text evidence="2">Expressed strongly in leaves and flowers, weakly in roots, and very weakly in stems.</text>
</comment>
<comment type="induction">
    <text evidence="2">Up-regulated upon glucose treatment.</text>
</comment>
<comment type="similarity">
    <text evidence="4">Belongs to the GeBP family.</text>
</comment>
<comment type="online information" name="Plant Transcription Factor Database">
    <link uri="https://planttfdb.gao-lab.org/family.php?fam=GeBP#family_intro"/>
</comment>
<organism>
    <name type="scientific">Arabidopsis thaliana</name>
    <name type="common">Mouse-ear cress</name>
    <dbReference type="NCBI Taxonomy" id="3702"/>
    <lineage>
        <taxon>Eukaryota</taxon>
        <taxon>Viridiplantae</taxon>
        <taxon>Streptophyta</taxon>
        <taxon>Embryophyta</taxon>
        <taxon>Tracheophyta</taxon>
        <taxon>Spermatophyta</taxon>
        <taxon>Magnoliopsida</taxon>
        <taxon>eudicotyledons</taxon>
        <taxon>Gunneridae</taxon>
        <taxon>Pentapetalae</taxon>
        <taxon>rosids</taxon>
        <taxon>malvids</taxon>
        <taxon>Brassicales</taxon>
        <taxon>Brassicaceae</taxon>
        <taxon>Camelineae</taxon>
        <taxon>Arabidopsis</taxon>
    </lineage>
</organism>
<accession>O23077</accession>
<sequence length="319" mass="35513">MAPLESPATASSSEVESSSEEIFKSSSEESKPKDPVTVPSSKTLKSPSAAVNSKTDSSDDSEKQSFVLTRRKKKEGAAESPAVKSGKKRAGEGSTSRDMHVKRVKKEDDNKKANPQRVWSEEDEISLLQAVIDFKAETGTSPWDHKNAFFDIAKKSISFDVSHVQFFDKIRRLKNKYFVNRKNKSGESNHDKKCLGLAVLIWGSDGMNVESPVKKDESILVKGKANSKEKKVEKPLVIEDEQVILGADSEWFEESFLVPVIANLGLDEYSVKKKWSKVSLETKKKIQEKMKVVDAKKCELLLAEMDVLKDVTSVLAQTN</sequence>
<keyword id="KW-0238">DNA-binding</keyword>
<keyword id="KW-0539">Nucleus</keyword>
<keyword id="KW-1185">Reference proteome</keyword>
<keyword id="KW-0678">Repressor</keyword>
<keyword id="KW-0804">Transcription</keyword>
<keyword id="KW-0805">Transcription regulation</keyword>
<evidence type="ECO:0000256" key="1">
    <source>
        <dbReference type="SAM" id="MobiDB-lite"/>
    </source>
</evidence>
<evidence type="ECO:0000269" key="2">
    <source>
    </source>
</evidence>
<evidence type="ECO:0000303" key="3">
    <source>
    </source>
</evidence>
<evidence type="ECO:0000305" key="4"/>
<evidence type="ECO:0000312" key="5">
    <source>
        <dbReference type="Araport" id="AT4G00250"/>
    </source>
</evidence>
<evidence type="ECO:0000312" key="6">
    <source>
        <dbReference type="EMBL" id="AAF02790.1"/>
    </source>
</evidence>